<keyword id="KW-0007">Acetylation</keyword>
<keyword id="KW-0117">Actin capping</keyword>
<keyword id="KW-0009">Actin-binding</keyword>
<keyword id="KW-0597">Phosphoprotein</keyword>
<keyword id="KW-1185">Reference proteome</keyword>
<reference key="1">
    <citation type="submission" date="2006-01" db="EMBL/GenBank/DDBJ databases">
        <title>NISC comparative sequencing initiative.</title>
        <authorList>
            <person name="Antonellis A."/>
            <person name="Ayele K."/>
            <person name="Benjamin B."/>
            <person name="Blakesley R.W."/>
            <person name="Boakye A."/>
            <person name="Bouffard G.G."/>
            <person name="Brinkley C."/>
            <person name="Brooks S."/>
            <person name="Chu G."/>
            <person name="Coleman H."/>
            <person name="Engle J."/>
            <person name="Gestole M."/>
            <person name="Greene A."/>
            <person name="Guan X."/>
            <person name="Gupta J."/>
            <person name="Haghighi P."/>
            <person name="Han J."/>
            <person name="Hansen N."/>
            <person name="Ho S.-L."/>
            <person name="Hu P."/>
            <person name="Hunter G."/>
            <person name="Hurle B."/>
            <person name="Idol J.R."/>
            <person name="Kwong P."/>
            <person name="Laric P."/>
            <person name="Larson S."/>
            <person name="Lee-Lin S.-Q."/>
            <person name="Legaspi R."/>
            <person name="Madden M."/>
            <person name="Maduro Q.L."/>
            <person name="Maduro V.B."/>
            <person name="Margulies E.H."/>
            <person name="Masiello C."/>
            <person name="Maskeri B."/>
            <person name="McDowell J."/>
            <person name="Mojidi H.A."/>
            <person name="Mullikin J.C."/>
            <person name="Oestreicher J.S."/>
            <person name="Park M."/>
            <person name="Portnoy M.E."/>
            <person name="Prasad A."/>
            <person name="Puri O."/>
            <person name="Reddix-Dugue N."/>
            <person name="Schandler K."/>
            <person name="Schueler M.G."/>
            <person name="Sison C."/>
            <person name="Stantripop S."/>
            <person name="Stephen E."/>
            <person name="Taye A."/>
            <person name="Thomas J.W."/>
            <person name="Thomas P.J."/>
            <person name="Tsipouri V."/>
            <person name="Ung L."/>
            <person name="Vogt J.L."/>
            <person name="Wetherby K.D."/>
            <person name="Young A."/>
            <person name="Green E.D."/>
        </authorList>
    </citation>
    <scope>NUCLEOTIDE SEQUENCE [LARGE SCALE GENOMIC DNA]</scope>
</reference>
<feature type="initiator methionine" description="Removed" evidence="2">
    <location>
        <position position="1"/>
    </location>
</feature>
<feature type="chain" id="PRO_0000260362" description="F-actin-capping protein subunit alpha-2">
    <location>
        <begin position="2"/>
        <end position="286"/>
    </location>
</feature>
<feature type="modified residue" description="N-acetylalanine" evidence="2">
    <location>
        <position position="2"/>
    </location>
</feature>
<feature type="modified residue" description="Phosphoserine" evidence="2">
    <location>
        <position position="9"/>
    </location>
</feature>
<name>CAZA2_RHIFE</name>
<proteinExistence type="inferred from homology"/>
<dbReference type="EMBL" id="DP000028">
    <property type="protein sequence ID" value="ABC87473.1"/>
    <property type="molecule type" value="Genomic_DNA"/>
</dbReference>
<dbReference type="RefSeq" id="XP_032954933.1">
    <property type="nucleotide sequence ID" value="XM_033099042.1"/>
</dbReference>
<dbReference type="SMR" id="Q2IBB9"/>
<dbReference type="FunCoup" id="Q2IBB9">
    <property type="interactions" value="2630"/>
</dbReference>
<dbReference type="Ensembl" id="ENSRFET00010031194.1">
    <property type="protein sequence ID" value="ENSRFEP00010028731.1"/>
    <property type="gene ID" value="ENSRFEG00010019032.1"/>
</dbReference>
<dbReference type="GeneID" id="117018187"/>
<dbReference type="GeneTree" id="ENSGT00950000183119"/>
<dbReference type="InParanoid" id="Q2IBB9"/>
<dbReference type="OMA" id="VACIEDH"/>
<dbReference type="OrthoDB" id="340550at2759"/>
<dbReference type="Proteomes" id="UP000472240">
    <property type="component" value="Chromosome 26"/>
</dbReference>
<dbReference type="GO" id="GO:0005903">
    <property type="term" value="C:brush border"/>
    <property type="evidence" value="ECO:0007669"/>
    <property type="project" value="Ensembl"/>
</dbReference>
<dbReference type="GO" id="GO:0030863">
    <property type="term" value="C:cortical cytoskeleton"/>
    <property type="evidence" value="ECO:0007669"/>
    <property type="project" value="Ensembl"/>
</dbReference>
<dbReference type="GO" id="GO:0008290">
    <property type="term" value="C:F-actin capping protein complex"/>
    <property type="evidence" value="ECO:0007669"/>
    <property type="project" value="Ensembl"/>
</dbReference>
<dbReference type="GO" id="GO:0016020">
    <property type="term" value="C:membrane"/>
    <property type="evidence" value="ECO:0007669"/>
    <property type="project" value="Ensembl"/>
</dbReference>
<dbReference type="GO" id="GO:0051015">
    <property type="term" value="F:actin filament binding"/>
    <property type="evidence" value="ECO:0007669"/>
    <property type="project" value="TreeGrafter"/>
</dbReference>
<dbReference type="GO" id="GO:0030036">
    <property type="term" value="P:actin cytoskeleton organization"/>
    <property type="evidence" value="ECO:0007669"/>
    <property type="project" value="TreeGrafter"/>
</dbReference>
<dbReference type="GO" id="GO:0051016">
    <property type="term" value="P:barbed-end actin filament capping"/>
    <property type="evidence" value="ECO:0007669"/>
    <property type="project" value="InterPro"/>
</dbReference>
<dbReference type="FunFam" id="3.30.1140.60:FF:000001">
    <property type="entry name" value="F-actin-capping protein subunit alpha"/>
    <property type="match status" value="1"/>
</dbReference>
<dbReference type="FunFam" id="3.90.1150.210:FF:000002">
    <property type="entry name" value="F-actin-capping protein subunit alpha"/>
    <property type="match status" value="1"/>
</dbReference>
<dbReference type="Gene3D" id="3.30.1140.60">
    <property type="entry name" value="F-actin capping protein, alpha subunit"/>
    <property type="match status" value="1"/>
</dbReference>
<dbReference type="Gene3D" id="3.90.1150.210">
    <property type="entry name" value="F-actin capping protein, beta subunit"/>
    <property type="match status" value="1"/>
</dbReference>
<dbReference type="InterPro" id="IPR002189">
    <property type="entry name" value="CapZ_alpha"/>
</dbReference>
<dbReference type="InterPro" id="IPR037282">
    <property type="entry name" value="CapZ_alpha/beta"/>
</dbReference>
<dbReference type="InterPro" id="IPR042276">
    <property type="entry name" value="CapZ_alpha/beta_2"/>
</dbReference>
<dbReference type="InterPro" id="IPR042489">
    <property type="entry name" value="CapZ_alpha_1"/>
</dbReference>
<dbReference type="InterPro" id="IPR017865">
    <property type="entry name" value="F-actin_cap_asu_CS"/>
</dbReference>
<dbReference type="PANTHER" id="PTHR10653">
    <property type="entry name" value="F-ACTIN-CAPPING PROTEIN SUBUNIT ALPHA"/>
    <property type="match status" value="1"/>
</dbReference>
<dbReference type="PANTHER" id="PTHR10653:SF2">
    <property type="entry name" value="F-ACTIN-CAPPING PROTEIN SUBUNIT ALPHA-2"/>
    <property type="match status" value="1"/>
</dbReference>
<dbReference type="Pfam" id="PF01267">
    <property type="entry name" value="F-actin_cap_A"/>
    <property type="match status" value="1"/>
</dbReference>
<dbReference type="PRINTS" id="PR00191">
    <property type="entry name" value="FACTINCAPA"/>
</dbReference>
<dbReference type="SUPFAM" id="SSF90096">
    <property type="entry name" value="Subunits of heterodimeric actin filament capping protein Capz"/>
    <property type="match status" value="1"/>
</dbReference>
<dbReference type="PROSITE" id="PS00748">
    <property type="entry name" value="F_ACTIN_CAPPING_A_1"/>
    <property type="match status" value="1"/>
</dbReference>
<dbReference type="PROSITE" id="PS00749">
    <property type="entry name" value="F_ACTIN_CAPPING_A_2"/>
    <property type="match status" value="1"/>
</dbReference>
<evidence type="ECO:0000250" key="1"/>
<evidence type="ECO:0000250" key="2">
    <source>
        <dbReference type="UniProtKB" id="P47755"/>
    </source>
</evidence>
<evidence type="ECO:0000305" key="3"/>
<protein>
    <recommendedName>
        <fullName>F-actin-capping protein subunit alpha-2</fullName>
    </recommendedName>
    <alternativeName>
        <fullName>CapZ alpha-2</fullName>
    </alternativeName>
</protein>
<organism>
    <name type="scientific">Rhinolophus ferrumequinum</name>
    <name type="common">Greater horseshoe bat</name>
    <dbReference type="NCBI Taxonomy" id="59479"/>
    <lineage>
        <taxon>Eukaryota</taxon>
        <taxon>Metazoa</taxon>
        <taxon>Chordata</taxon>
        <taxon>Craniata</taxon>
        <taxon>Vertebrata</taxon>
        <taxon>Euteleostomi</taxon>
        <taxon>Mammalia</taxon>
        <taxon>Eutheria</taxon>
        <taxon>Laurasiatheria</taxon>
        <taxon>Chiroptera</taxon>
        <taxon>Yinpterochiroptera</taxon>
        <taxon>Rhinolophoidea</taxon>
        <taxon>Rhinolophidae</taxon>
        <taxon>Rhinolophinae</taxon>
        <taxon>Rhinolophus</taxon>
    </lineage>
</organism>
<accession>Q2IBB9</accession>
<gene>
    <name type="primary">CAPZA2</name>
</gene>
<comment type="function">
    <text evidence="1">F-actin-capping proteins bind in a Ca(2+)-independent manner to the fast growing ends of actin filaments (barbed end) thereby blocking the exchange of subunits at these ends. Unlike other capping proteins (such as gelsolin and severin), these proteins do not sever actin filaments (By similarity).</text>
</comment>
<comment type="subunit">
    <text evidence="1">Component of the F-actin capping complex, composed of a heterodimer of an alpha and a beta subunit. Component of the WASH complex, composed of F-actin-capping protein subunit alpha (CAPZA1, CAPZA2 or CAPZA3), F-actin-capping protein subunit beta (CAPZB), WASHC1, WASHC2, WASHC3, WASHC4 and WASHC5. Interacts with RCSD1/CAPZIP (By similarity).</text>
</comment>
<comment type="similarity">
    <text evidence="3">Belongs to the F-actin-capping protein alpha subunit family.</text>
</comment>
<sequence>MADLEEQLSDEEKVRIAAKFIIHAPPGEFNEVFNDVRLLLNNDNLLREGAAHAFAQYNLDQFTPVKIEGYEDQVLITEHGDLGNGKFLDPKNRICFKFDHLRKEATDPRPYEAENAIESWRTSVETALRAYVKEHYPNGVCTVYGKKIDGQQTIIACIESHQFQAKNFWNGRWRSEWKFTITPSTTQVVGILKIQVHYYEDGNVQLVSHKDTQDPLPVSNEVQTAKEFIKIVEAAENEYQTAISENYQTMSDTTFKALRRQLPVTRTKIDWNKILSYKIGKEMQNA</sequence>